<evidence type="ECO:0000250" key="1"/>
<evidence type="ECO:0000255" key="2">
    <source>
        <dbReference type="PROSITE-ProRule" id="PRU00021"/>
    </source>
</evidence>
<evidence type="ECO:0000269" key="3">
    <source>
    </source>
</evidence>
<evidence type="ECO:0000305" key="4"/>
<evidence type="ECO:0007829" key="5">
    <source>
        <dbReference type="PDB" id="1UCS"/>
    </source>
</evidence>
<organism>
    <name type="scientific">Lycodichthys dearborni</name>
    <name type="common">Antarctic eelpout</name>
    <name type="synonym">Rhigophila dearborni</name>
    <dbReference type="NCBI Taxonomy" id="8201"/>
    <lineage>
        <taxon>Eukaryota</taxon>
        <taxon>Metazoa</taxon>
        <taxon>Chordata</taxon>
        <taxon>Craniata</taxon>
        <taxon>Vertebrata</taxon>
        <taxon>Euteleostomi</taxon>
        <taxon>Actinopterygii</taxon>
        <taxon>Neopterygii</taxon>
        <taxon>Teleostei</taxon>
        <taxon>Neoteleostei</taxon>
        <taxon>Acanthomorphata</taxon>
        <taxon>Eupercaria</taxon>
        <taxon>Perciformes</taxon>
        <taxon>Cottioidei</taxon>
        <taxon>Zoarcales</taxon>
        <taxon>Zoarcidae</taxon>
        <taxon>Lycodinae</taxon>
        <taxon>Lycodichthys</taxon>
    </lineage>
</organism>
<feature type="chain" id="PRO_0000155151" description="Ice-structuring protein RD1">
    <location>
        <begin position="1"/>
        <end position="64"/>
    </location>
</feature>
<feature type="domain" description="AFP-like" evidence="2">
    <location>
        <begin position="4"/>
        <end position="63"/>
    </location>
</feature>
<feature type="site" description="Important for ice-binding" evidence="1">
    <location>
        <position position="9"/>
    </location>
</feature>
<feature type="site" description="Important for ice-binding" evidence="1">
    <location>
        <position position="14"/>
    </location>
</feature>
<feature type="site" description="Important for ice-binding" evidence="1">
    <location>
        <position position="18"/>
    </location>
</feature>
<feature type="site" description="Important for ice-binding" evidence="1">
    <location>
        <position position="44"/>
    </location>
</feature>
<feature type="strand" evidence="5">
    <location>
        <begin position="4"/>
        <end position="9"/>
    </location>
</feature>
<feature type="helix" evidence="5">
    <location>
        <begin position="19"/>
        <end position="21"/>
    </location>
</feature>
<feature type="strand" evidence="5">
    <location>
        <begin position="22"/>
        <end position="25"/>
    </location>
</feature>
<feature type="helix" evidence="5">
    <location>
        <begin position="34"/>
        <end position="36"/>
    </location>
</feature>
<feature type="helix" evidence="5">
    <location>
        <begin position="37"/>
        <end position="40"/>
    </location>
</feature>
<feature type="strand" evidence="5">
    <location>
        <begin position="44"/>
        <end position="47"/>
    </location>
</feature>
<feature type="helix" evidence="5">
    <location>
        <begin position="57"/>
        <end position="59"/>
    </location>
</feature>
<accession>P35751</accession>
<name>ANP1_LYCDA</name>
<keyword id="KW-0002">3D-structure</keyword>
<keyword id="KW-0047">Antifreeze protein</keyword>
<keyword id="KW-0903">Direct protein sequencing</keyword>
<keyword id="KW-0964">Secreted</keyword>
<proteinExistence type="evidence at protein level"/>
<reference key="1">
    <citation type="journal article" date="1995" name="Biochim. Biophys. Acta">
        <title>Antifreeze peptide heterogeneity in an antarctic eel pout includes an unusually large major variant comprised of two 7 kDa type III AFPs linked in tandem.</title>
        <authorList>
            <person name="Wang X."/>
            <person name="Devries A.L."/>
            <person name="Cheng C.-H.C."/>
        </authorList>
    </citation>
    <scope>PROTEIN SEQUENCE</scope>
    <scope>SUBCELLULAR LOCATION</scope>
    <scope>TISSUE SPECIFICITY</scope>
</reference>
<reference key="2">
    <citation type="journal article" date="2003" name="Biophys. J.">
        <title>The refined crystal structure of an eel pout type III antifreeze protein RD1 at 0.62-A resolution reveals structuRAl microheterogeneity of protein and solvation.</title>
        <authorList>
            <person name="Ko T.-P."/>
            <person name="Robinson H."/>
            <person name="Gao Y.-G."/>
            <person name="Cheng C.H.-C."/>
            <person name="DeVries A.L."/>
            <person name="Wang A.H.-J."/>
        </authorList>
    </citation>
    <scope>X-RAY CRYSTALLOGRAPHY (0.62 ANGSTROMS)</scope>
</reference>
<sequence length="64" mass="6906">NKASVVANQLIPINTALTLIMMKAEVVTPMGIPAEEIPKLVGMQVNRAVPLGTTLMPDMVKNYE</sequence>
<comment type="function">
    <text evidence="1">Contributes to protect fish blood from freezing at subzero sea water temperatures. Lowers the blood freezing point. Binds to nascent ice crystals and prevents further growth (By similarity).</text>
</comment>
<comment type="subcellular location">
    <subcellularLocation>
        <location evidence="3">Secreted</location>
    </subcellularLocation>
</comment>
<comment type="tissue specificity">
    <text evidence="3">Detected in blood serum (at protein level).</text>
</comment>
<comment type="similarity">
    <text evidence="4">Belongs to the type-III AFP family.</text>
</comment>
<protein>
    <recommendedName>
        <fullName>Ice-structuring protein RD1</fullName>
        <shortName>ISP RD1</shortName>
    </recommendedName>
    <alternativeName>
        <fullName>Antifreeze peptide RD1</fullName>
    </alternativeName>
</protein>
<dbReference type="PIR" id="S53512">
    <property type="entry name" value="S53512"/>
</dbReference>
<dbReference type="PDB" id="1UCS">
    <property type="method" value="X-ray"/>
    <property type="resolution" value="0.62 A"/>
    <property type="chains" value="A=1-64"/>
</dbReference>
<dbReference type="PDBsum" id="1UCS"/>
<dbReference type="BMRB" id="P35751"/>
<dbReference type="SMR" id="P35751"/>
<dbReference type="EvolutionaryTrace" id="P35751"/>
<dbReference type="GO" id="GO:0005576">
    <property type="term" value="C:extracellular region"/>
    <property type="evidence" value="ECO:0007669"/>
    <property type="project" value="UniProtKB-SubCell"/>
</dbReference>
<dbReference type="CDD" id="cd11617">
    <property type="entry name" value="Antifreeze_III"/>
    <property type="match status" value="1"/>
</dbReference>
<dbReference type="Gene3D" id="3.90.1210.10">
    <property type="entry name" value="Antifreeze-like/N-acetylneuraminic acid synthase C-terminal domain"/>
    <property type="match status" value="1"/>
</dbReference>
<dbReference type="InterPro" id="IPR006190">
    <property type="entry name" value="AFP_Neu5c_C"/>
</dbReference>
<dbReference type="InterPro" id="IPR036732">
    <property type="entry name" value="AFP_Neu5c_C_sf"/>
</dbReference>
<dbReference type="InterPro" id="IPR006013">
    <property type="entry name" value="Antifreeze_III"/>
</dbReference>
<dbReference type="InterPro" id="IPR013974">
    <property type="entry name" value="SAF"/>
</dbReference>
<dbReference type="Pfam" id="PF08666">
    <property type="entry name" value="SAF"/>
    <property type="match status" value="1"/>
</dbReference>
<dbReference type="PRINTS" id="PR00357">
    <property type="entry name" value="ANTIFREEZIII"/>
</dbReference>
<dbReference type="SUPFAM" id="SSF51269">
    <property type="entry name" value="AFP III-like domain"/>
    <property type="match status" value="1"/>
</dbReference>
<dbReference type="PROSITE" id="PS50844">
    <property type="entry name" value="AFP_LIKE"/>
    <property type="match status" value="1"/>
</dbReference>